<organism>
    <name type="scientific">Listeria monocytogenes serovar 1/2a (strain ATCC BAA-679 / EGD-e)</name>
    <dbReference type="NCBI Taxonomy" id="169963"/>
    <lineage>
        <taxon>Bacteria</taxon>
        <taxon>Bacillati</taxon>
        <taxon>Bacillota</taxon>
        <taxon>Bacilli</taxon>
        <taxon>Bacillales</taxon>
        <taxon>Listeriaceae</taxon>
        <taxon>Listeria</taxon>
    </lineage>
</organism>
<proteinExistence type="inferred from homology"/>
<accession>Q8YAE2</accession>
<evidence type="ECO:0000255" key="1">
    <source>
        <dbReference type="HAMAP-Rule" id="MF_00607"/>
    </source>
</evidence>
<protein>
    <recommendedName>
        <fullName evidence="1">Ribosomal RNA small subunit methyltransferase A</fullName>
        <ecNumber evidence="1">2.1.1.182</ecNumber>
    </recommendedName>
    <alternativeName>
        <fullName evidence="1">16S rRNA (adenine(1518)-N(6)/adenine(1519)-N(6))-dimethyltransferase</fullName>
    </alternativeName>
    <alternativeName>
        <fullName evidence="1">16S rRNA dimethyladenosine transferase</fullName>
    </alternativeName>
    <alternativeName>
        <fullName evidence="1">16S rRNA dimethylase</fullName>
    </alternativeName>
    <alternativeName>
        <fullName evidence="1">S-adenosylmethionine-6-N', N'-adenosyl(rRNA) dimethyltransferase</fullName>
    </alternativeName>
</protein>
<reference key="1">
    <citation type="journal article" date="2001" name="Science">
        <title>Comparative genomics of Listeria species.</title>
        <authorList>
            <person name="Glaser P."/>
            <person name="Frangeul L."/>
            <person name="Buchrieser C."/>
            <person name="Rusniok C."/>
            <person name="Amend A."/>
            <person name="Baquero F."/>
            <person name="Berche P."/>
            <person name="Bloecker H."/>
            <person name="Brandt P."/>
            <person name="Chakraborty T."/>
            <person name="Charbit A."/>
            <person name="Chetouani F."/>
            <person name="Couve E."/>
            <person name="de Daruvar A."/>
            <person name="Dehoux P."/>
            <person name="Domann E."/>
            <person name="Dominguez-Bernal G."/>
            <person name="Duchaud E."/>
            <person name="Durant L."/>
            <person name="Dussurget O."/>
            <person name="Entian K.-D."/>
            <person name="Fsihi H."/>
            <person name="Garcia-del Portillo F."/>
            <person name="Garrido P."/>
            <person name="Gautier L."/>
            <person name="Goebel W."/>
            <person name="Gomez-Lopez N."/>
            <person name="Hain T."/>
            <person name="Hauf J."/>
            <person name="Jackson D."/>
            <person name="Jones L.-M."/>
            <person name="Kaerst U."/>
            <person name="Kreft J."/>
            <person name="Kuhn M."/>
            <person name="Kunst F."/>
            <person name="Kurapkat G."/>
            <person name="Madueno E."/>
            <person name="Maitournam A."/>
            <person name="Mata Vicente J."/>
            <person name="Ng E."/>
            <person name="Nedjari H."/>
            <person name="Nordsiek G."/>
            <person name="Novella S."/>
            <person name="de Pablos B."/>
            <person name="Perez-Diaz J.-C."/>
            <person name="Purcell R."/>
            <person name="Remmel B."/>
            <person name="Rose M."/>
            <person name="Schlueter T."/>
            <person name="Simoes N."/>
            <person name="Tierrez A."/>
            <person name="Vazquez-Boland J.-A."/>
            <person name="Voss H."/>
            <person name="Wehland J."/>
            <person name="Cossart P."/>
        </authorList>
    </citation>
    <scope>NUCLEOTIDE SEQUENCE [LARGE SCALE GENOMIC DNA]</scope>
    <source>
        <strain>ATCC BAA-679 / EGD-e</strain>
    </source>
</reference>
<sequence length="295" mass="33096">MSKDIATPGRTTEILKKYGFLFKKSLGQNFLIDSNILTRITDTAEITKETNVIEIGPGIGALTEQLAKTANEVVAFEIDQRLLPILDDTLSAYNNVKVVHGDVLKADVEEVIAEQFAKPELPLKIVANLPYYVTTPIILKLLHDNIPADSMTFMLQKEVADRISAVPSTKSYGSLTIAIQFYMEAELAFIVPKTVFMPQPNVDSAVIHLKRRKEPLAEVNDEEFFFEVTRASFAQRRKTLWNNLASKFPALKPRKDELVEGLNAIGIDLIRRGETLDIPEFAKLSNFLGDFLKEK</sequence>
<gene>
    <name evidence="1" type="primary">rsmA</name>
    <name evidence="1" type="synonym">ksgA</name>
    <name type="ordered locus">lmo0188</name>
</gene>
<dbReference type="EC" id="2.1.1.182" evidence="1"/>
<dbReference type="EMBL" id="AL591973">
    <property type="protein sequence ID" value="CAC98403.1"/>
    <property type="molecule type" value="Genomic_DNA"/>
</dbReference>
<dbReference type="PIR" id="AE1098">
    <property type="entry name" value="AE1098"/>
</dbReference>
<dbReference type="RefSeq" id="NP_463719.1">
    <property type="nucleotide sequence ID" value="NC_003210.1"/>
</dbReference>
<dbReference type="RefSeq" id="WP_003722718.1">
    <property type="nucleotide sequence ID" value="NZ_CP149495.1"/>
</dbReference>
<dbReference type="SMR" id="Q8YAE2"/>
<dbReference type="STRING" id="169963.gene:17592824"/>
<dbReference type="PaxDb" id="169963-lmo0188"/>
<dbReference type="EnsemblBacteria" id="CAC98403">
    <property type="protein sequence ID" value="CAC98403"/>
    <property type="gene ID" value="CAC98403"/>
</dbReference>
<dbReference type="GeneID" id="987014"/>
<dbReference type="KEGG" id="lmo:lmo0188"/>
<dbReference type="PATRIC" id="fig|169963.11.peg.193"/>
<dbReference type="eggNOG" id="COG0030">
    <property type="taxonomic scope" value="Bacteria"/>
</dbReference>
<dbReference type="HOGENOM" id="CLU_041220_0_0_9"/>
<dbReference type="OrthoDB" id="9814755at2"/>
<dbReference type="PhylomeDB" id="Q8YAE2"/>
<dbReference type="BioCyc" id="LMON169963:LMO0188-MONOMER"/>
<dbReference type="Proteomes" id="UP000000817">
    <property type="component" value="Chromosome"/>
</dbReference>
<dbReference type="GO" id="GO:0005829">
    <property type="term" value="C:cytosol"/>
    <property type="evidence" value="ECO:0000318"/>
    <property type="project" value="GO_Central"/>
</dbReference>
<dbReference type="GO" id="GO:0052908">
    <property type="term" value="F:16S rRNA (adenine(1518)-N(6)/adenine(1519)-N(6))-dimethyltransferase activity"/>
    <property type="evidence" value="ECO:0007669"/>
    <property type="project" value="UniProtKB-EC"/>
</dbReference>
<dbReference type="GO" id="GO:0003723">
    <property type="term" value="F:RNA binding"/>
    <property type="evidence" value="ECO:0007669"/>
    <property type="project" value="UniProtKB-KW"/>
</dbReference>
<dbReference type="GO" id="GO:0000179">
    <property type="term" value="F:rRNA (adenine-N6,N6-)-dimethyltransferase activity"/>
    <property type="evidence" value="ECO:0000318"/>
    <property type="project" value="GO_Central"/>
</dbReference>
<dbReference type="GO" id="GO:0031167">
    <property type="term" value="P:rRNA methylation"/>
    <property type="evidence" value="ECO:0000318"/>
    <property type="project" value="GO_Central"/>
</dbReference>
<dbReference type="CDD" id="cd02440">
    <property type="entry name" value="AdoMet_MTases"/>
    <property type="match status" value="1"/>
</dbReference>
<dbReference type="FunFam" id="1.10.8.100:FF:000002">
    <property type="entry name" value="Ribosomal RNA small subunit methyltransferase A"/>
    <property type="match status" value="1"/>
</dbReference>
<dbReference type="FunFam" id="3.40.50.150:FF:000023">
    <property type="entry name" value="Ribosomal RNA small subunit methyltransferase A"/>
    <property type="match status" value="1"/>
</dbReference>
<dbReference type="Gene3D" id="1.10.8.100">
    <property type="entry name" value="Ribosomal RNA adenine dimethylase-like, domain 2"/>
    <property type="match status" value="1"/>
</dbReference>
<dbReference type="Gene3D" id="3.40.50.150">
    <property type="entry name" value="Vaccinia Virus protein VP39"/>
    <property type="match status" value="1"/>
</dbReference>
<dbReference type="HAMAP" id="MF_00607">
    <property type="entry name" value="16SrRNA_methyltr_A"/>
    <property type="match status" value="1"/>
</dbReference>
<dbReference type="InterPro" id="IPR001737">
    <property type="entry name" value="KsgA/Erm"/>
</dbReference>
<dbReference type="InterPro" id="IPR023165">
    <property type="entry name" value="rRNA_Ade_diMease-like_C"/>
</dbReference>
<dbReference type="InterPro" id="IPR020596">
    <property type="entry name" value="rRNA_Ade_Mease_Trfase_CS"/>
</dbReference>
<dbReference type="InterPro" id="IPR020598">
    <property type="entry name" value="rRNA_Ade_methylase_Trfase_N"/>
</dbReference>
<dbReference type="InterPro" id="IPR011530">
    <property type="entry name" value="rRNA_adenine_dimethylase"/>
</dbReference>
<dbReference type="InterPro" id="IPR029063">
    <property type="entry name" value="SAM-dependent_MTases_sf"/>
</dbReference>
<dbReference type="NCBIfam" id="TIGR00755">
    <property type="entry name" value="ksgA"/>
    <property type="match status" value="1"/>
</dbReference>
<dbReference type="PANTHER" id="PTHR11727">
    <property type="entry name" value="DIMETHYLADENOSINE TRANSFERASE"/>
    <property type="match status" value="1"/>
</dbReference>
<dbReference type="PANTHER" id="PTHR11727:SF7">
    <property type="entry name" value="DIMETHYLADENOSINE TRANSFERASE-RELATED"/>
    <property type="match status" value="1"/>
</dbReference>
<dbReference type="Pfam" id="PF00398">
    <property type="entry name" value="RrnaAD"/>
    <property type="match status" value="1"/>
</dbReference>
<dbReference type="SMART" id="SM00650">
    <property type="entry name" value="rADc"/>
    <property type="match status" value="1"/>
</dbReference>
<dbReference type="SUPFAM" id="SSF53335">
    <property type="entry name" value="S-adenosyl-L-methionine-dependent methyltransferases"/>
    <property type="match status" value="1"/>
</dbReference>
<dbReference type="PROSITE" id="PS01131">
    <property type="entry name" value="RRNA_A_DIMETH"/>
    <property type="match status" value="1"/>
</dbReference>
<dbReference type="PROSITE" id="PS51689">
    <property type="entry name" value="SAM_RNA_A_N6_MT"/>
    <property type="match status" value="1"/>
</dbReference>
<name>RSMA_LISMO</name>
<keyword id="KW-0963">Cytoplasm</keyword>
<keyword id="KW-0489">Methyltransferase</keyword>
<keyword id="KW-1185">Reference proteome</keyword>
<keyword id="KW-0694">RNA-binding</keyword>
<keyword id="KW-0698">rRNA processing</keyword>
<keyword id="KW-0949">S-adenosyl-L-methionine</keyword>
<keyword id="KW-0808">Transferase</keyword>
<feature type="chain" id="PRO_0000101553" description="Ribosomal RNA small subunit methyltransferase A">
    <location>
        <begin position="1"/>
        <end position="295"/>
    </location>
</feature>
<feature type="binding site" evidence="1">
    <location>
        <position position="29"/>
    </location>
    <ligand>
        <name>S-adenosyl-L-methionine</name>
        <dbReference type="ChEBI" id="CHEBI:59789"/>
    </ligand>
</feature>
<feature type="binding site" evidence="1">
    <location>
        <position position="31"/>
    </location>
    <ligand>
        <name>S-adenosyl-L-methionine</name>
        <dbReference type="ChEBI" id="CHEBI:59789"/>
    </ligand>
</feature>
<feature type="binding site" evidence="1">
    <location>
        <position position="56"/>
    </location>
    <ligand>
        <name>S-adenosyl-L-methionine</name>
        <dbReference type="ChEBI" id="CHEBI:59789"/>
    </ligand>
</feature>
<feature type="binding site" evidence="1">
    <location>
        <position position="77"/>
    </location>
    <ligand>
        <name>S-adenosyl-L-methionine</name>
        <dbReference type="ChEBI" id="CHEBI:59789"/>
    </ligand>
</feature>
<feature type="binding site" evidence="1">
    <location>
        <position position="102"/>
    </location>
    <ligand>
        <name>S-adenosyl-L-methionine</name>
        <dbReference type="ChEBI" id="CHEBI:59789"/>
    </ligand>
</feature>
<feature type="binding site" evidence="1">
    <location>
        <position position="128"/>
    </location>
    <ligand>
        <name>S-adenosyl-L-methionine</name>
        <dbReference type="ChEBI" id="CHEBI:59789"/>
    </ligand>
</feature>
<comment type="function">
    <text evidence="1">Specifically dimethylates two adjacent adenosines (A1518 and A1519) in the loop of a conserved hairpin near the 3'-end of 16S rRNA in the 30S particle. May play a critical role in biogenesis of 30S subunits.</text>
</comment>
<comment type="catalytic activity">
    <reaction evidence="1">
        <text>adenosine(1518)/adenosine(1519) in 16S rRNA + 4 S-adenosyl-L-methionine = N(6)-dimethyladenosine(1518)/N(6)-dimethyladenosine(1519) in 16S rRNA + 4 S-adenosyl-L-homocysteine + 4 H(+)</text>
        <dbReference type="Rhea" id="RHEA:19609"/>
        <dbReference type="Rhea" id="RHEA-COMP:10232"/>
        <dbReference type="Rhea" id="RHEA-COMP:10233"/>
        <dbReference type="ChEBI" id="CHEBI:15378"/>
        <dbReference type="ChEBI" id="CHEBI:57856"/>
        <dbReference type="ChEBI" id="CHEBI:59789"/>
        <dbReference type="ChEBI" id="CHEBI:74411"/>
        <dbReference type="ChEBI" id="CHEBI:74493"/>
        <dbReference type="EC" id="2.1.1.182"/>
    </reaction>
</comment>
<comment type="subcellular location">
    <subcellularLocation>
        <location evidence="1">Cytoplasm</location>
    </subcellularLocation>
</comment>
<comment type="similarity">
    <text evidence="1">Belongs to the class I-like SAM-binding methyltransferase superfamily. rRNA adenine N(6)-methyltransferase family. RsmA subfamily.</text>
</comment>